<comment type="function">
    <text evidence="1">Mediates the voltage-dependent proton permeability of excitable membranes. Forms a proton-selective channel through which protons may pass in accordance with their electrochemical gradient (By similarity).</text>
</comment>
<comment type="subunit">
    <text evidence="1">Homodimer.</text>
</comment>
<comment type="subcellular location">
    <subcellularLocation>
        <location evidence="3">Membrane</location>
        <topology evidence="3">Multi-pass membrane protein</topology>
    </subcellularLocation>
    <subcellularLocation>
        <location evidence="1">Cell membrane</location>
        <topology evidence="1">Multi-pass membrane protein</topology>
    </subcellularLocation>
</comment>
<comment type="domain">
    <text evidence="1">The segment S4 is probably the voltage-sensor and is characterized by a series of positively charged amino acids at every third position. Unlike other voltage-gated ion channels it lacks the pore domain (By similarity).</text>
</comment>
<comment type="domain">
    <text evidence="1">The C-terminal coiled coil region mediates homodimerization. It is essential for normal subcellular localization (By similarity).</text>
</comment>
<comment type="similarity">
    <text evidence="3">Belongs to the hydrogen channel family.</text>
</comment>
<name>HVCN1_XENLA</name>
<accession>Q5M7E9</accession>
<protein>
    <recommendedName>
        <fullName>Voltage-gated hydrogen channel 1</fullName>
    </recommendedName>
    <alternativeName>
        <fullName>Hydrogen voltage-gated channel 1</fullName>
        <shortName>HV1</shortName>
    </alternativeName>
</protein>
<dbReference type="EMBL" id="BC088681">
    <property type="protein sequence ID" value="AAH88681.1"/>
    <property type="molecule type" value="mRNA"/>
</dbReference>
<dbReference type="RefSeq" id="NP_001088875.1">
    <property type="nucleotide sequence ID" value="NM_001095406.1"/>
</dbReference>
<dbReference type="RefSeq" id="XP_018104580.1">
    <property type="nucleotide sequence ID" value="XM_018249091.1"/>
</dbReference>
<dbReference type="RefSeq" id="XP_018104589.1">
    <property type="nucleotide sequence ID" value="XM_018249100.1"/>
</dbReference>
<dbReference type="RefSeq" id="XP_018104596.1">
    <property type="nucleotide sequence ID" value="XM_018249107.1"/>
</dbReference>
<dbReference type="RefSeq" id="XP_018104605.1">
    <property type="nucleotide sequence ID" value="XM_018249116.1"/>
</dbReference>
<dbReference type="RefSeq" id="XP_018104612.1">
    <property type="nucleotide sequence ID" value="XM_018249123.1"/>
</dbReference>
<dbReference type="SMR" id="Q5M7E9"/>
<dbReference type="DNASU" id="496219"/>
<dbReference type="GeneID" id="496219"/>
<dbReference type="KEGG" id="xla:496219"/>
<dbReference type="AGR" id="Xenbase:XB-GENE-955592"/>
<dbReference type="CTD" id="496219"/>
<dbReference type="Xenbase" id="XB-GENE-955592">
    <property type="gene designation" value="hvcn1.L"/>
</dbReference>
<dbReference type="OMA" id="WEDEELH"/>
<dbReference type="OrthoDB" id="427456at2759"/>
<dbReference type="Proteomes" id="UP000186698">
    <property type="component" value="Chromosome 1L"/>
</dbReference>
<dbReference type="Bgee" id="496219">
    <property type="expression patterns" value="Expressed in pancreas and 16 other cell types or tissues"/>
</dbReference>
<dbReference type="GO" id="GO:0034702">
    <property type="term" value="C:monoatomic ion channel complex"/>
    <property type="evidence" value="ECO:0007669"/>
    <property type="project" value="UniProtKB-KW"/>
</dbReference>
<dbReference type="GO" id="GO:0005886">
    <property type="term" value="C:plasma membrane"/>
    <property type="evidence" value="ECO:0000250"/>
    <property type="project" value="UniProtKB"/>
</dbReference>
<dbReference type="GO" id="GO:0030171">
    <property type="term" value="F:voltage-gated proton channel activity"/>
    <property type="evidence" value="ECO:0000250"/>
    <property type="project" value="UniProtKB"/>
</dbReference>
<dbReference type="GO" id="GO:0071467">
    <property type="term" value="P:cellular response to pH"/>
    <property type="evidence" value="ECO:0000250"/>
    <property type="project" value="UniProtKB"/>
</dbReference>
<dbReference type="GO" id="GO:0071294">
    <property type="term" value="P:cellular response to zinc ion"/>
    <property type="evidence" value="ECO:0000250"/>
    <property type="project" value="UniProtKB"/>
</dbReference>
<dbReference type="GO" id="GO:1902600">
    <property type="term" value="P:proton transmembrane transport"/>
    <property type="evidence" value="ECO:0000250"/>
    <property type="project" value="UniProtKB"/>
</dbReference>
<dbReference type="FunFam" id="1.20.120.350:FF:000054">
    <property type="entry name" value="voltage-gated hydrogen channel 1"/>
    <property type="match status" value="1"/>
</dbReference>
<dbReference type="Gene3D" id="1.20.5.170">
    <property type="match status" value="1"/>
</dbReference>
<dbReference type="Gene3D" id="1.20.120.350">
    <property type="entry name" value="Voltage-gated potassium channels. Chain C"/>
    <property type="match status" value="1"/>
</dbReference>
<dbReference type="InterPro" id="IPR031846">
    <property type="entry name" value="Hvcn1"/>
</dbReference>
<dbReference type="InterPro" id="IPR005821">
    <property type="entry name" value="Ion_trans_dom"/>
</dbReference>
<dbReference type="InterPro" id="IPR027359">
    <property type="entry name" value="Volt_channel_dom_sf"/>
</dbReference>
<dbReference type="PANTHER" id="PTHR46480">
    <property type="entry name" value="F20B24.22"/>
    <property type="match status" value="1"/>
</dbReference>
<dbReference type="PANTHER" id="PTHR46480:SF1">
    <property type="entry name" value="VOLTAGE-GATED HYDROGEN CHANNEL 1"/>
    <property type="match status" value="1"/>
</dbReference>
<dbReference type="Pfam" id="PF00520">
    <property type="entry name" value="Ion_trans"/>
    <property type="match status" value="1"/>
</dbReference>
<dbReference type="SUPFAM" id="SSF81324">
    <property type="entry name" value="Voltage-gated potassium channels"/>
    <property type="match status" value="1"/>
</dbReference>
<keyword id="KW-1003">Cell membrane</keyword>
<keyword id="KW-0175">Coiled coil</keyword>
<keyword id="KW-0407">Ion channel</keyword>
<keyword id="KW-0406">Ion transport</keyword>
<keyword id="KW-0472">Membrane</keyword>
<keyword id="KW-1185">Reference proteome</keyword>
<keyword id="KW-0812">Transmembrane</keyword>
<keyword id="KW-1133">Transmembrane helix</keyword>
<keyword id="KW-0813">Transport</keyword>
<keyword id="KW-0851">Voltage-gated channel</keyword>
<proteinExistence type="evidence at transcript level"/>
<gene>
    <name type="primary">hvcn1</name>
</gene>
<sequence>MAGCLRHFTSVGDDTKKREWKQEDVEVAYEEPLKNTPHPFIASYSFRGALKWLLSSHKFQIVIICLVILDALFVLVEVLLDLELLAEKVDHIIPEIFHYLSISVLTFFILEIAGKLYAFRLEFFHHKFEVFDAAIVVISFIIDIVYISREDIFNAVGLLILLRLWRVARIVNGVIVSVKTRAEEKMHKLKEQKGSLLEKVAQLEQQCAQQEQEIGRLHKLLQEHNVFPAS</sequence>
<feature type="chain" id="PRO_0000342191" description="Voltage-gated hydrogen channel 1">
    <location>
        <begin position="1"/>
        <end position="230"/>
    </location>
</feature>
<feature type="topological domain" description="Cytoplasmic" evidence="1">
    <location>
        <begin position="1"/>
        <end position="58"/>
    </location>
</feature>
<feature type="transmembrane region" description="Helical; Name=Segment S1" evidence="1">
    <location>
        <begin position="59"/>
        <end position="79"/>
    </location>
</feature>
<feature type="topological domain" description="Extracellular" evidence="1">
    <location>
        <begin position="80"/>
        <end position="96"/>
    </location>
</feature>
<feature type="transmembrane region" description="Helical; Name=Segment S2" evidence="1">
    <location>
        <begin position="97"/>
        <end position="119"/>
    </location>
</feature>
<feature type="topological domain" description="Cytoplasmic" evidence="1">
    <location>
        <begin position="120"/>
        <end position="127"/>
    </location>
</feature>
<feature type="transmembrane region" description="Helical; Name=Segment S3" evidence="1">
    <location>
        <begin position="128"/>
        <end position="148"/>
    </location>
</feature>
<feature type="topological domain" description="Extracellular" evidence="1">
    <location>
        <begin position="149"/>
        <end position="155"/>
    </location>
</feature>
<feature type="transmembrane region" description="Helical; Name=Segment S4" evidence="1">
    <location>
        <begin position="156"/>
        <end position="176"/>
    </location>
</feature>
<feature type="topological domain" description="Cytoplasmic" evidence="1">
    <location>
        <begin position="177"/>
        <end position="230"/>
    </location>
</feature>
<feature type="coiled-coil region" evidence="2">
    <location>
        <begin position="178"/>
        <end position="225"/>
    </location>
</feature>
<organism>
    <name type="scientific">Xenopus laevis</name>
    <name type="common">African clawed frog</name>
    <dbReference type="NCBI Taxonomy" id="8355"/>
    <lineage>
        <taxon>Eukaryota</taxon>
        <taxon>Metazoa</taxon>
        <taxon>Chordata</taxon>
        <taxon>Craniata</taxon>
        <taxon>Vertebrata</taxon>
        <taxon>Euteleostomi</taxon>
        <taxon>Amphibia</taxon>
        <taxon>Batrachia</taxon>
        <taxon>Anura</taxon>
        <taxon>Pipoidea</taxon>
        <taxon>Pipidae</taxon>
        <taxon>Xenopodinae</taxon>
        <taxon>Xenopus</taxon>
        <taxon>Xenopus</taxon>
    </lineage>
</organism>
<reference key="1">
    <citation type="submission" date="2004-12" db="EMBL/GenBank/DDBJ databases">
        <authorList>
            <consortium name="NIH - Xenopus Gene Collection (XGC) project"/>
        </authorList>
    </citation>
    <scope>NUCLEOTIDE SEQUENCE [LARGE SCALE MRNA]</scope>
    <source>
        <tissue>Testis</tissue>
    </source>
</reference>
<evidence type="ECO:0000250" key="1"/>
<evidence type="ECO:0000255" key="2"/>
<evidence type="ECO:0000305" key="3"/>